<gene>
    <name type="primary">OR4C6</name>
</gene>
<proteinExistence type="evidence at transcript level"/>
<organism>
    <name type="scientific">Homo sapiens</name>
    <name type="common">Human</name>
    <dbReference type="NCBI Taxonomy" id="9606"/>
    <lineage>
        <taxon>Eukaryota</taxon>
        <taxon>Metazoa</taxon>
        <taxon>Chordata</taxon>
        <taxon>Craniata</taxon>
        <taxon>Vertebrata</taxon>
        <taxon>Euteleostomi</taxon>
        <taxon>Mammalia</taxon>
        <taxon>Eutheria</taxon>
        <taxon>Euarchontoglires</taxon>
        <taxon>Primates</taxon>
        <taxon>Haplorrhini</taxon>
        <taxon>Catarrhini</taxon>
        <taxon>Hominidae</taxon>
        <taxon>Homo</taxon>
    </lineage>
</organism>
<reference key="1">
    <citation type="submission" date="2001-07" db="EMBL/GenBank/DDBJ databases">
        <title>Genome-wide discovery and analysis of human seven transmembrane helix receptor genes.</title>
        <authorList>
            <person name="Suwa M."/>
            <person name="Sato T."/>
            <person name="Okouchi I."/>
            <person name="Arita M."/>
            <person name="Futami K."/>
            <person name="Matsumoto S."/>
            <person name="Tsutsumi S."/>
            <person name="Aburatani H."/>
            <person name="Asai K."/>
            <person name="Akiyama Y."/>
        </authorList>
    </citation>
    <scope>NUCLEOTIDE SEQUENCE [GENOMIC DNA]</scope>
</reference>
<reference key="2">
    <citation type="submission" date="2005-07" db="EMBL/GenBank/DDBJ databases">
        <authorList>
            <person name="Mural R.J."/>
            <person name="Istrail S."/>
            <person name="Sutton G.G."/>
            <person name="Florea L."/>
            <person name="Halpern A.L."/>
            <person name="Mobarry C.M."/>
            <person name="Lippert R."/>
            <person name="Walenz B."/>
            <person name="Shatkay H."/>
            <person name="Dew I."/>
            <person name="Miller J.R."/>
            <person name="Flanigan M.J."/>
            <person name="Edwards N.J."/>
            <person name="Bolanos R."/>
            <person name="Fasulo D."/>
            <person name="Halldorsson B.V."/>
            <person name="Hannenhalli S."/>
            <person name="Turner R."/>
            <person name="Yooseph S."/>
            <person name="Lu F."/>
            <person name="Nusskern D.R."/>
            <person name="Shue B.C."/>
            <person name="Zheng X.H."/>
            <person name="Zhong F."/>
            <person name="Delcher A.L."/>
            <person name="Huson D.H."/>
            <person name="Kravitz S.A."/>
            <person name="Mouchard L."/>
            <person name="Reinert K."/>
            <person name="Remington K.A."/>
            <person name="Clark A.G."/>
            <person name="Waterman M.S."/>
            <person name="Eichler E.E."/>
            <person name="Adams M.D."/>
            <person name="Hunkapiller M.W."/>
            <person name="Myers E.W."/>
            <person name="Venter J.C."/>
        </authorList>
    </citation>
    <scope>NUCLEOTIDE SEQUENCE [LARGE SCALE GENOMIC DNA]</scope>
</reference>
<reference key="3">
    <citation type="journal article" date="2004" name="Genome Res.">
        <title>The status, quality, and expansion of the NIH full-length cDNA project: the Mammalian Gene Collection (MGC).</title>
        <authorList>
            <consortium name="The MGC Project Team"/>
        </authorList>
    </citation>
    <scope>NUCLEOTIDE SEQUENCE [LARGE SCALE MRNA]</scope>
</reference>
<reference key="4">
    <citation type="journal article" date="2004" name="Proc. Natl. Acad. Sci. U.S.A.">
        <title>The human olfactory receptor gene family.</title>
        <authorList>
            <person name="Malnic B."/>
            <person name="Godfrey P.A."/>
            <person name="Buck L.B."/>
        </authorList>
    </citation>
    <scope>IDENTIFICATION</scope>
</reference>
<reference key="5">
    <citation type="journal article" date="2004" name="Proc. Natl. Acad. Sci. U.S.A.">
        <authorList>
            <person name="Malnic B."/>
            <person name="Godfrey P.A."/>
            <person name="Buck L.B."/>
        </authorList>
    </citation>
    <scope>ERRATUM OF PUBMED:14983052</scope>
</reference>
<comment type="function">
    <text evidence="3">Odorant receptor.</text>
</comment>
<comment type="subcellular location">
    <subcellularLocation>
        <location>Cell membrane</location>
        <topology>Multi-pass membrane protein</topology>
    </subcellularLocation>
</comment>
<comment type="similarity">
    <text evidence="2">Belongs to the G-protein coupled receptor 1 family.</text>
</comment>
<comment type="online information" name="Human Olfactory Receptor Data Exploratorium (HORDE)">
    <link uri="http://genome.weizmann.ac.il/horde/card/index/symbol:OR4C6"/>
</comment>
<accession>Q8NH72</accession>
<accession>B2RP11</accession>
<accession>Q6IFD2</accession>
<keyword id="KW-1003">Cell membrane</keyword>
<keyword id="KW-1015">Disulfide bond</keyword>
<keyword id="KW-0297">G-protein coupled receptor</keyword>
<keyword id="KW-0325">Glycoprotein</keyword>
<keyword id="KW-0472">Membrane</keyword>
<keyword id="KW-0552">Olfaction</keyword>
<keyword id="KW-0675">Receptor</keyword>
<keyword id="KW-1185">Reference proteome</keyword>
<keyword id="KW-0716">Sensory transduction</keyword>
<keyword id="KW-0807">Transducer</keyword>
<keyword id="KW-0812">Transmembrane</keyword>
<keyword id="KW-1133">Transmembrane helix</keyword>
<evidence type="ECO:0000255" key="1"/>
<evidence type="ECO:0000255" key="2">
    <source>
        <dbReference type="PROSITE-ProRule" id="PRU00521"/>
    </source>
</evidence>
<evidence type="ECO:0000305" key="3"/>
<sequence>MENQNNVTEFILLGLTENLELWKIFSAVFLVMYVATVLENLLIVVTIITSQSLRSPMYFFLTFLSLLDVMFSSVVAPKVIVDTLSKSTTISLKGCLTQLFVEHFFGGVGIILLTVMAYDRYVAICKPLHYTIIMSPRVCCLMVGGAWVGGFMHAMIQLLFMYQIPFCGPNIIDHFICDLFQLLTLACTDTHILGLLVTLNSGMMCVAIFLILIASYTVILCSLKSYSSKGRHKALSTCSSHLTVVVLFFVPCIFLYMRPVVTHPIDKAMAVSDSIITPMLNPLIYTLRNAEVKSAMKKLWMKWEALAGK</sequence>
<feature type="chain" id="PRO_0000150531" description="Olfactory receptor 4C6">
    <location>
        <begin position="1"/>
        <end position="309"/>
    </location>
</feature>
<feature type="topological domain" description="Extracellular" evidence="1">
    <location>
        <begin position="1"/>
        <end position="23"/>
    </location>
</feature>
<feature type="transmembrane region" description="Helical; Name=1" evidence="1">
    <location>
        <begin position="24"/>
        <end position="47"/>
    </location>
</feature>
<feature type="topological domain" description="Cytoplasmic" evidence="1">
    <location>
        <begin position="48"/>
        <end position="55"/>
    </location>
</feature>
<feature type="transmembrane region" description="Helical; Name=2" evidence="1">
    <location>
        <begin position="56"/>
        <end position="77"/>
    </location>
</feature>
<feature type="topological domain" description="Extracellular" evidence="1">
    <location>
        <begin position="78"/>
        <end position="98"/>
    </location>
</feature>
<feature type="transmembrane region" description="Helical; Name=3" evidence="1">
    <location>
        <begin position="99"/>
        <end position="118"/>
    </location>
</feature>
<feature type="topological domain" description="Cytoplasmic" evidence="1">
    <location>
        <begin position="119"/>
        <end position="137"/>
    </location>
</feature>
<feature type="transmembrane region" description="Helical; Name=4" evidence="1">
    <location>
        <begin position="138"/>
        <end position="156"/>
    </location>
</feature>
<feature type="topological domain" description="Extracellular" evidence="1">
    <location>
        <begin position="157"/>
        <end position="193"/>
    </location>
</feature>
<feature type="transmembrane region" description="Helical; Name=5" evidence="1">
    <location>
        <begin position="194"/>
        <end position="217"/>
    </location>
</feature>
<feature type="topological domain" description="Cytoplasmic" evidence="1">
    <location>
        <begin position="218"/>
        <end position="233"/>
    </location>
</feature>
<feature type="transmembrane region" description="Helical; Name=6" evidence="1">
    <location>
        <begin position="234"/>
        <end position="256"/>
    </location>
</feature>
<feature type="topological domain" description="Extracellular" evidence="1">
    <location>
        <begin position="257"/>
        <end position="267"/>
    </location>
</feature>
<feature type="transmembrane region" description="Helical; Name=7" evidence="1">
    <location>
        <begin position="268"/>
        <end position="287"/>
    </location>
</feature>
<feature type="topological domain" description="Cytoplasmic" evidence="1">
    <location>
        <begin position="288"/>
        <end position="309"/>
    </location>
</feature>
<feature type="glycosylation site" description="N-linked (GlcNAc...) asparagine" evidence="1">
    <location>
        <position position="6"/>
    </location>
</feature>
<feature type="disulfide bond" evidence="2">
    <location>
        <begin position="95"/>
        <end position="187"/>
    </location>
</feature>
<feature type="sequence variant" id="VAR_034191" description="In dbSNP:rs11230600.">
    <original>I</original>
    <variation>T</variation>
    <location>
        <position position="133"/>
    </location>
</feature>
<protein>
    <recommendedName>
        <fullName>Olfactory receptor 4C6</fullName>
    </recommendedName>
    <alternativeName>
        <fullName>Olfactory receptor OR11-138</fullName>
    </alternativeName>
</protein>
<name>OR4C6_HUMAN</name>
<dbReference type="EMBL" id="AB065517">
    <property type="protein sequence ID" value="BAC05765.1"/>
    <property type="molecule type" value="Genomic_DNA"/>
</dbReference>
<dbReference type="EMBL" id="CH471076">
    <property type="protein sequence ID" value="EAW73679.1"/>
    <property type="molecule type" value="Genomic_DNA"/>
</dbReference>
<dbReference type="EMBL" id="BC137216">
    <property type="protein sequence ID" value="AAI37217.1"/>
    <property type="molecule type" value="mRNA"/>
</dbReference>
<dbReference type="EMBL" id="BC137218">
    <property type="protein sequence ID" value="AAI37219.1"/>
    <property type="molecule type" value="mRNA"/>
</dbReference>
<dbReference type="EMBL" id="BK004330">
    <property type="protein sequence ID" value="DAA04728.1"/>
    <property type="molecule type" value="Genomic_DNA"/>
</dbReference>
<dbReference type="CCDS" id="CCDS31506.1"/>
<dbReference type="RefSeq" id="NP_001004704.1">
    <property type="nucleotide sequence ID" value="NM_001004704.2"/>
</dbReference>
<dbReference type="SMR" id="Q8NH72"/>
<dbReference type="BioGRID" id="128533">
    <property type="interactions" value="1"/>
</dbReference>
<dbReference type="FunCoup" id="Q8NH72">
    <property type="interactions" value="416"/>
</dbReference>
<dbReference type="STRING" id="9606.ENSP00000493334"/>
<dbReference type="GlyCosmos" id="Q8NH72">
    <property type="glycosylation" value="1 site, No reported glycans"/>
</dbReference>
<dbReference type="GlyGen" id="Q8NH72">
    <property type="glycosylation" value="1 site"/>
</dbReference>
<dbReference type="iPTMnet" id="Q8NH72"/>
<dbReference type="PhosphoSitePlus" id="Q8NH72"/>
<dbReference type="BioMuta" id="OR4C6"/>
<dbReference type="DMDM" id="38372822"/>
<dbReference type="PaxDb" id="9606-ENSP00000324769"/>
<dbReference type="Antibodypedia" id="58938">
    <property type="antibodies" value="51 antibodies from 14 providers"/>
</dbReference>
<dbReference type="DNASU" id="219432"/>
<dbReference type="Ensembl" id="ENST00000314259.5">
    <property type="protein sequence ID" value="ENSP00000324769.3"/>
    <property type="gene ID" value="ENSG00000181903.7"/>
</dbReference>
<dbReference type="Ensembl" id="ENST00000690330.1">
    <property type="protein sequence ID" value="ENSP00000508428.1"/>
    <property type="gene ID" value="ENSG00000181903.7"/>
</dbReference>
<dbReference type="GeneID" id="219432"/>
<dbReference type="KEGG" id="hsa:219432"/>
<dbReference type="MANE-Select" id="ENST00000314259.5">
    <property type="protein sequence ID" value="ENSP00000324769.3"/>
    <property type="RefSeq nucleotide sequence ID" value="NM_001004704.2"/>
    <property type="RefSeq protein sequence ID" value="NP_001004704.1"/>
</dbReference>
<dbReference type="UCSC" id="uc010rik.2">
    <property type="organism name" value="human"/>
</dbReference>
<dbReference type="AGR" id="HGNC:14743"/>
<dbReference type="CTD" id="219432"/>
<dbReference type="DisGeNET" id="219432"/>
<dbReference type="GeneCards" id="OR4C6"/>
<dbReference type="HGNC" id="HGNC:14743">
    <property type="gene designation" value="OR4C6"/>
</dbReference>
<dbReference type="HPA" id="ENSG00000181903">
    <property type="expression patterns" value="Not detected"/>
</dbReference>
<dbReference type="neXtProt" id="NX_Q8NH72"/>
<dbReference type="OpenTargets" id="ENSG00000181903"/>
<dbReference type="PharmGKB" id="PA32264"/>
<dbReference type="VEuPathDB" id="HostDB:ENSG00000181903"/>
<dbReference type="eggNOG" id="ENOG502T8YI">
    <property type="taxonomic scope" value="Eukaryota"/>
</dbReference>
<dbReference type="GeneTree" id="ENSGT00940000158647"/>
<dbReference type="HOGENOM" id="CLU_012526_8_1_1"/>
<dbReference type="InParanoid" id="Q8NH72"/>
<dbReference type="OMA" id="VTMITSQ"/>
<dbReference type="OrthoDB" id="10017003at2759"/>
<dbReference type="PAN-GO" id="Q8NH72">
    <property type="GO annotations" value="2 GO annotations based on evolutionary models"/>
</dbReference>
<dbReference type="PhylomeDB" id="Q8NH72"/>
<dbReference type="TreeFam" id="TF352732"/>
<dbReference type="PathwayCommons" id="Q8NH72"/>
<dbReference type="Reactome" id="R-HSA-9752946">
    <property type="pathway name" value="Expression and translocation of olfactory receptors"/>
</dbReference>
<dbReference type="BioGRID-ORCS" id="219432">
    <property type="hits" value="56 hits in 741 CRISPR screens"/>
</dbReference>
<dbReference type="GeneWiki" id="OR4C6"/>
<dbReference type="GenomeRNAi" id="219432"/>
<dbReference type="Pharos" id="Q8NH72">
    <property type="development level" value="Tdark"/>
</dbReference>
<dbReference type="PRO" id="PR:Q8NH72"/>
<dbReference type="Proteomes" id="UP000005640">
    <property type="component" value="Chromosome 11"/>
</dbReference>
<dbReference type="RNAct" id="Q8NH72">
    <property type="molecule type" value="protein"/>
</dbReference>
<dbReference type="Bgee" id="ENSG00000181903">
    <property type="expression patterns" value="Expressed in tonsil and 2 other cell types or tissues"/>
</dbReference>
<dbReference type="ExpressionAtlas" id="Q8NH72">
    <property type="expression patterns" value="baseline and differential"/>
</dbReference>
<dbReference type="GO" id="GO:0005886">
    <property type="term" value="C:plasma membrane"/>
    <property type="evidence" value="ECO:0000318"/>
    <property type="project" value="GO_Central"/>
</dbReference>
<dbReference type="GO" id="GO:0004930">
    <property type="term" value="F:G protein-coupled receptor activity"/>
    <property type="evidence" value="ECO:0007669"/>
    <property type="project" value="UniProtKB-KW"/>
</dbReference>
<dbReference type="GO" id="GO:0004984">
    <property type="term" value="F:olfactory receptor activity"/>
    <property type="evidence" value="ECO:0000318"/>
    <property type="project" value="GO_Central"/>
</dbReference>
<dbReference type="CDD" id="cd15939">
    <property type="entry name" value="7tmA_OR4A-like"/>
    <property type="match status" value="1"/>
</dbReference>
<dbReference type="FunFam" id="1.10.1220.70:FF:000001">
    <property type="entry name" value="Olfactory receptor"/>
    <property type="match status" value="1"/>
</dbReference>
<dbReference type="FunFam" id="1.20.1070.10:FF:000007">
    <property type="entry name" value="Olfactory receptor"/>
    <property type="match status" value="1"/>
</dbReference>
<dbReference type="Gene3D" id="1.20.1070.10">
    <property type="entry name" value="Rhodopsin 7-helix transmembrane proteins"/>
    <property type="match status" value="1"/>
</dbReference>
<dbReference type="InterPro" id="IPR000276">
    <property type="entry name" value="GPCR_Rhodpsn"/>
</dbReference>
<dbReference type="InterPro" id="IPR017452">
    <property type="entry name" value="GPCR_Rhodpsn_7TM"/>
</dbReference>
<dbReference type="InterPro" id="IPR000725">
    <property type="entry name" value="Olfact_rcpt"/>
</dbReference>
<dbReference type="InterPro" id="IPR050427">
    <property type="entry name" value="Olfactory_Receptors"/>
</dbReference>
<dbReference type="PANTHER" id="PTHR48002">
    <property type="entry name" value="OLFACTORY RECEPTOR"/>
    <property type="match status" value="1"/>
</dbReference>
<dbReference type="Pfam" id="PF13853">
    <property type="entry name" value="7tm_4"/>
    <property type="match status" value="1"/>
</dbReference>
<dbReference type="PRINTS" id="PR00237">
    <property type="entry name" value="GPCRRHODOPSN"/>
</dbReference>
<dbReference type="PRINTS" id="PR00245">
    <property type="entry name" value="OLFACTORYR"/>
</dbReference>
<dbReference type="SUPFAM" id="SSF81321">
    <property type="entry name" value="Family A G protein-coupled receptor-like"/>
    <property type="match status" value="1"/>
</dbReference>
<dbReference type="PROSITE" id="PS00237">
    <property type="entry name" value="G_PROTEIN_RECEP_F1_1"/>
    <property type="match status" value="1"/>
</dbReference>
<dbReference type="PROSITE" id="PS50262">
    <property type="entry name" value="G_PROTEIN_RECEP_F1_2"/>
    <property type="match status" value="1"/>
</dbReference>